<feature type="signal peptide" evidence="3">
    <location>
        <begin position="1"/>
        <end position="27"/>
    </location>
</feature>
<feature type="chain" id="PRO_0000004436" description="Cocaine- and amphetamine-regulated transcript protein">
    <location>
        <begin position="28"/>
        <end position="129"/>
    </location>
</feature>
<feature type="peptide" id="PRO_0000004437" description="CART(1-52)" evidence="1">
    <location>
        <begin position="28"/>
        <end position="79"/>
    </location>
</feature>
<feature type="peptide" id="PRO_0000004438" description="CART(55-102)" evidence="1">
    <location>
        <begin position="82"/>
        <end position="129"/>
    </location>
</feature>
<feature type="peptide" id="PRO_0000004439" description="CART(62-102)" evidence="3">
    <location>
        <begin position="89"/>
        <end position="129"/>
    </location>
</feature>
<feature type="modified residue" description="Phosphotyrosine" evidence="2">
    <location>
        <position position="41"/>
    </location>
</feature>
<feature type="modified residue" description="Phosphoserine" evidence="5">
    <location>
        <position position="48"/>
    </location>
</feature>
<feature type="disulfide bond" evidence="1">
    <location>
        <begin position="95"/>
        <end position="113"/>
    </location>
</feature>
<feature type="disulfide bond" evidence="1">
    <location>
        <begin position="101"/>
        <end position="121"/>
    </location>
</feature>
<feature type="disulfide bond" evidence="1">
    <location>
        <begin position="115"/>
        <end position="128"/>
    </location>
</feature>
<feature type="splice variant" id="VSP_000793" description="In isoform Short." evidence="4">
    <location>
        <begin position="54"/>
        <end position="66"/>
    </location>
</feature>
<feature type="modified residue" description="Phosphoserine" evidence="5">
    <location sequence="P56388-2">
        <position position="48"/>
    </location>
</feature>
<comment type="function">
    <text evidence="1">Satiety factor closely associated with the actions of leptin and neuropeptide y; this anorectic peptide inhibits both normal and starvation-induced feeding and completely blocks the feeding response induced by neuropeptide Y and regulated by leptin in the hypothalamus.</text>
</comment>
<comment type="subcellular location">
    <subcellularLocation>
        <location evidence="4">Secreted</location>
    </subcellularLocation>
</comment>
<comment type="alternative products">
    <event type="alternative splicing"/>
    <isoform>
        <id>P56388-1</id>
        <name>Long</name>
        <sequence type="displayed"/>
    </isoform>
    <isoform>
        <id>P56388-2</id>
        <name>Short</name>
        <sequence type="described" ref="VSP_000793"/>
    </isoform>
</comment>
<comment type="similarity">
    <text evidence="4">Belongs to the CART family.</text>
</comment>
<accession>P56388</accession>
<accession>Q9QXZ8</accession>
<organism>
    <name type="scientific">Mus musculus</name>
    <name type="common">Mouse</name>
    <dbReference type="NCBI Taxonomy" id="10090"/>
    <lineage>
        <taxon>Eukaryota</taxon>
        <taxon>Metazoa</taxon>
        <taxon>Chordata</taxon>
        <taxon>Craniata</taxon>
        <taxon>Vertebrata</taxon>
        <taxon>Euteleostomi</taxon>
        <taxon>Mammalia</taxon>
        <taxon>Eutheria</taxon>
        <taxon>Euarchontoglires</taxon>
        <taxon>Glires</taxon>
        <taxon>Rodentia</taxon>
        <taxon>Myomorpha</taxon>
        <taxon>Muroidea</taxon>
        <taxon>Muridae</taxon>
        <taxon>Murinae</taxon>
        <taxon>Mus</taxon>
        <taxon>Mus</taxon>
    </lineage>
</organism>
<evidence type="ECO:0000250" key="1"/>
<evidence type="ECO:0000250" key="2">
    <source>
        <dbReference type="UniProtKB" id="P49192"/>
    </source>
</evidence>
<evidence type="ECO:0000255" key="3"/>
<evidence type="ECO:0000305" key="4"/>
<evidence type="ECO:0007744" key="5">
    <source>
    </source>
</evidence>
<reference key="1">
    <citation type="journal article" date="1999" name="Brain Res.">
        <title>CART: from gene to function.</title>
        <authorList>
            <person name="Adams L.D."/>
            <person name="Gong W."/>
            <person name="Vechia S.D."/>
            <person name="Hunter R.G."/>
            <person name="Kuhar M.J."/>
        </authorList>
    </citation>
    <scope>NUCLEOTIDE SEQUENCE [GENOMIC DNA]</scope>
    <scope>ALTERNATIVE SPLICING</scope>
    <source>
        <strain>129/SvJ</strain>
    </source>
</reference>
<reference key="2">
    <citation type="journal article" date="2004" name="Genome Res.">
        <title>The status, quality, and expansion of the NIH full-length cDNA project: the Mammalian Gene Collection (MGC).</title>
        <authorList>
            <consortium name="The MGC Project Team"/>
        </authorList>
    </citation>
    <scope>NUCLEOTIDE SEQUENCE [LARGE SCALE MRNA] (ISOFORM LONG)</scope>
    <source>
        <strain>C57BL/6J</strain>
        <tissue>Brain</tissue>
    </source>
</reference>
<reference key="3">
    <citation type="journal article" date="2010" name="Cell">
        <title>A tissue-specific atlas of mouse protein phosphorylation and expression.</title>
        <authorList>
            <person name="Huttlin E.L."/>
            <person name="Jedrychowski M.P."/>
            <person name="Elias J.E."/>
            <person name="Goswami T."/>
            <person name="Rad R."/>
            <person name="Beausoleil S.A."/>
            <person name="Villen J."/>
            <person name="Haas W."/>
            <person name="Sowa M.E."/>
            <person name="Gygi S.P."/>
        </authorList>
    </citation>
    <scope>PHOSPHORYLATION [LARGE SCALE ANALYSIS] AT SER-48</scope>
    <scope>PHOSPHORYLATION [LARGE SCALE ANALYSIS] AT SER-48 (ISOFORM SHORT)</scope>
    <scope>IDENTIFICATION BY MASS SPECTROMETRY [LARGE SCALE ANALYSIS]</scope>
    <source>
        <tissue>Brain</tissue>
        <tissue>Heart</tissue>
    </source>
</reference>
<keyword id="KW-0025">Alternative splicing</keyword>
<keyword id="KW-0165">Cleavage on pair of basic residues</keyword>
<keyword id="KW-1015">Disulfide bond</keyword>
<keyword id="KW-0527">Neuropeptide</keyword>
<keyword id="KW-0529">Neurotransmitter</keyword>
<keyword id="KW-0597">Phosphoprotein</keyword>
<keyword id="KW-1185">Reference proteome</keyword>
<keyword id="KW-0964">Secreted</keyword>
<keyword id="KW-0732">Signal</keyword>
<dbReference type="EMBL" id="AF148071">
    <property type="protein sequence ID" value="AAF24168.1"/>
    <property type="molecule type" value="Genomic_DNA"/>
</dbReference>
<dbReference type="EMBL" id="BC056431">
    <property type="protein sequence ID" value="AAH56431.1"/>
    <property type="molecule type" value="mRNA"/>
</dbReference>
<dbReference type="CCDS" id="CCDS36763.1">
    <molecule id="P56388-1"/>
</dbReference>
<dbReference type="CCDS" id="CCDS88509.1">
    <molecule id="P56388-2"/>
</dbReference>
<dbReference type="RefSeq" id="NP_001074962.1">
    <molecule id="P56388-2"/>
    <property type="nucleotide sequence ID" value="NM_001081493.2"/>
</dbReference>
<dbReference type="RefSeq" id="NP_038760.3">
    <molecule id="P56388-1"/>
    <property type="nucleotide sequence ID" value="NM_013732.7"/>
</dbReference>
<dbReference type="SMR" id="P56388"/>
<dbReference type="BioGRID" id="205141">
    <property type="interactions" value="1"/>
</dbReference>
<dbReference type="FunCoup" id="P56388">
    <property type="interactions" value="99"/>
</dbReference>
<dbReference type="STRING" id="10090.ENSMUSP00000022150"/>
<dbReference type="iPTMnet" id="P56388"/>
<dbReference type="PhosphoSitePlus" id="P56388"/>
<dbReference type="PaxDb" id="10090-ENSMUSP00000022150"/>
<dbReference type="PeptideAtlas" id="P56388"/>
<dbReference type="ProteomicsDB" id="283675">
    <molecule id="P56388-1"/>
</dbReference>
<dbReference type="ProteomicsDB" id="283676">
    <molecule id="P56388-2"/>
</dbReference>
<dbReference type="Antibodypedia" id="24184">
    <property type="antibodies" value="227 antibodies from 30 providers"/>
</dbReference>
<dbReference type="DNASU" id="27220"/>
<dbReference type="Ensembl" id="ENSMUST00000022150.8">
    <molecule id="P56388-1"/>
    <property type="protein sequence ID" value="ENSMUSP00000022150.7"/>
    <property type="gene ID" value="ENSMUSG00000021647.8"/>
</dbReference>
<dbReference type="Ensembl" id="ENSMUST00000224142.2">
    <molecule id="P56388-2"/>
    <property type="protein sequence ID" value="ENSMUSP00000152981.2"/>
    <property type="gene ID" value="ENSMUSG00000021647.8"/>
</dbReference>
<dbReference type="GeneID" id="27220"/>
<dbReference type="KEGG" id="mmu:27220"/>
<dbReference type="UCSC" id="uc007rpw.2">
    <molecule id="P56388-1"/>
    <property type="organism name" value="mouse"/>
</dbReference>
<dbReference type="AGR" id="MGI:1351330"/>
<dbReference type="CTD" id="9607"/>
<dbReference type="MGI" id="MGI:1351330">
    <property type="gene designation" value="Cartpt"/>
</dbReference>
<dbReference type="VEuPathDB" id="HostDB:ENSMUSG00000021647"/>
<dbReference type="eggNOG" id="ENOG502S2YU">
    <property type="taxonomic scope" value="Eukaryota"/>
</dbReference>
<dbReference type="GeneTree" id="ENSGT00390000018319"/>
<dbReference type="HOGENOM" id="CLU_157363_1_0_1"/>
<dbReference type="InParanoid" id="P56388"/>
<dbReference type="OMA" id="RIYEKKY"/>
<dbReference type="OrthoDB" id="9936511at2759"/>
<dbReference type="PhylomeDB" id="P56388"/>
<dbReference type="TreeFam" id="TF332948"/>
<dbReference type="BioGRID-ORCS" id="27220">
    <property type="hits" value="2 hits in 78 CRISPR screens"/>
</dbReference>
<dbReference type="PRO" id="PR:P56388"/>
<dbReference type="Proteomes" id="UP000000589">
    <property type="component" value="Chromosome 13"/>
</dbReference>
<dbReference type="RNAct" id="P56388">
    <property type="molecule type" value="protein"/>
</dbReference>
<dbReference type="Bgee" id="ENSMUSG00000021647">
    <property type="expression patterns" value="Expressed in arcuate nucleus of hypothalamus and 81 other cell types or tissues"/>
</dbReference>
<dbReference type="ExpressionAtlas" id="P56388">
    <property type="expression patterns" value="baseline and differential"/>
</dbReference>
<dbReference type="GO" id="GO:0005615">
    <property type="term" value="C:extracellular space"/>
    <property type="evidence" value="ECO:0000314"/>
    <property type="project" value="HGNC-UCL"/>
</dbReference>
<dbReference type="GO" id="GO:0030141">
    <property type="term" value="C:secretory granule"/>
    <property type="evidence" value="ECO:0007669"/>
    <property type="project" value="Ensembl"/>
</dbReference>
<dbReference type="GO" id="GO:0045202">
    <property type="term" value="C:synapse"/>
    <property type="evidence" value="ECO:0007669"/>
    <property type="project" value="GOC"/>
</dbReference>
<dbReference type="GO" id="GO:0005184">
    <property type="term" value="F:neuropeptide hormone activity"/>
    <property type="evidence" value="ECO:0000304"/>
    <property type="project" value="MGI"/>
</dbReference>
<dbReference type="GO" id="GO:0008343">
    <property type="term" value="P:adult feeding behavior"/>
    <property type="evidence" value="ECO:0000314"/>
    <property type="project" value="HGNC-UCL"/>
</dbReference>
<dbReference type="GO" id="GO:0009267">
    <property type="term" value="P:cellular response to starvation"/>
    <property type="evidence" value="ECO:0000314"/>
    <property type="project" value="HGNC-UCL"/>
</dbReference>
<dbReference type="GO" id="GO:0007268">
    <property type="term" value="P:chemical synaptic transmission"/>
    <property type="evidence" value="ECO:0007669"/>
    <property type="project" value="UniProtKB-KW"/>
</dbReference>
<dbReference type="GO" id="GO:0032922">
    <property type="term" value="P:circadian regulation of gene expression"/>
    <property type="evidence" value="ECO:0000250"/>
    <property type="project" value="HGNC-UCL"/>
</dbReference>
<dbReference type="GO" id="GO:0007186">
    <property type="term" value="P:G protein-coupled receptor signaling pathway"/>
    <property type="evidence" value="ECO:0000314"/>
    <property type="project" value="HGNC-UCL"/>
</dbReference>
<dbReference type="GO" id="GO:0001678">
    <property type="term" value="P:intracellular glucose homeostasis"/>
    <property type="evidence" value="ECO:0000250"/>
    <property type="project" value="HGNC-UCL"/>
</dbReference>
<dbReference type="GO" id="GO:0032099">
    <property type="term" value="P:negative regulation of appetite"/>
    <property type="evidence" value="ECO:0000315"/>
    <property type="project" value="HGNC-UCL"/>
</dbReference>
<dbReference type="GO" id="GO:0045779">
    <property type="term" value="P:negative regulation of bone resorption"/>
    <property type="evidence" value="ECO:0000316"/>
    <property type="project" value="HGNC-UCL"/>
</dbReference>
<dbReference type="GO" id="GO:0070093">
    <property type="term" value="P:negative regulation of glucagon secretion"/>
    <property type="evidence" value="ECO:0007669"/>
    <property type="project" value="Ensembl"/>
</dbReference>
<dbReference type="GO" id="GO:0045671">
    <property type="term" value="P:negative regulation of osteoclast differentiation"/>
    <property type="evidence" value="ECO:0000304"/>
    <property type="project" value="HGNC-UCL"/>
</dbReference>
<dbReference type="GO" id="GO:0007218">
    <property type="term" value="P:neuropeptide signaling pathway"/>
    <property type="evidence" value="ECO:0000304"/>
    <property type="project" value="MGI"/>
</dbReference>
<dbReference type="GO" id="GO:0045777">
    <property type="term" value="P:positive regulation of blood pressure"/>
    <property type="evidence" value="ECO:0000250"/>
    <property type="project" value="HGNC-UCL"/>
</dbReference>
<dbReference type="GO" id="GO:0032812">
    <property type="term" value="P:positive regulation of epinephrine secretion"/>
    <property type="evidence" value="ECO:0000250"/>
    <property type="project" value="HGNC-UCL"/>
</dbReference>
<dbReference type="GO" id="GO:0043410">
    <property type="term" value="P:positive regulation of MAPK cascade"/>
    <property type="evidence" value="ECO:0000314"/>
    <property type="project" value="HGNC-UCL"/>
</dbReference>
<dbReference type="GO" id="GO:0051971">
    <property type="term" value="P:positive regulation of transmission of nerve impulse"/>
    <property type="evidence" value="ECO:0000250"/>
    <property type="project" value="HGNC-UCL"/>
</dbReference>
<dbReference type="GO" id="GO:0046850">
    <property type="term" value="P:regulation of bone remodeling"/>
    <property type="evidence" value="ECO:0000315"/>
    <property type="project" value="MGI"/>
</dbReference>
<dbReference type="GO" id="GO:0050796">
    <property type="term" value="P:regulation of insulin secretion"/>
    <property type="evidence" value="ECO:0007669"/>
    <property type="project" value="Ensembl"/>
</dbReference>
<dbReference type="GO" id="GO:0043278">
    <property type="term" value="P:response to morphine"/>
    <property type="evidence" value="ECO:0007669"/>
    <property type="project" value="Ensembl"/>
</dbReference>
<dbReference type="GO" id="GO:0070253">
    <property type="term" value="P:somatostatin secretion"/>
    <property type="evidence" value="ECO:0007669"/>
    <property type="project" value="Ensembl"/>
</dbReference>
<dbReference type="CDD" id="cd22741">
    <property type="entry name" value="CART_CTD-like"/>
    <property type="match status" value="1"/>
</dbReference>
<dbReference type="FunFam" id="4.10.40.30:FF:000001">
    <property type="entry name" value="Cocaine-and amphetamine-regulated transcript protein"/>
    <property type="match status" value="1"/>
</dbReference>
<dbReference type="Gene3D" id="4.10.40.30">
    <property type="entry name" value="CART, C-terminal domain"/>
    <property type="match status" value="1"/>
</dbReference>
<dbReference type="InterPro" id="IPR009106">
    <property type="entry name" value="CART"/>
</dbReference>
<dbReference type="InterPro" id="IPR036722">
    <property type="entry name" value="CART_C_sf"/>
</dbReference>
<dbReference type="PANTHER" id="PTHR16655">
    <property type="entry name" value="COCAINE AND AMPHETAMINE REGULATED TRANSCRIPT PROTEIN"/>
    <property type="match status" value="1"/>
</dbReference>
<dbReference type="PANTHER" id="PTHR16655:SF0">
    <property type="entry name" value="COCAINE- AND AMPHETAMINE-REGULATED TRANSCRIPT PROTEIN"/>
    <property type="match status" value="1"/>
</dbReference>
<dbReference type="Pfam" id="PF06373">
    <property type="entry name" value="CART"/>
    <property type="match status" value="1"/>
</dbReference>
<dbReference type="SUPFAM" id="SSF64546">
    <property type="entry name" value="Satiety factor CART (cocaine and amphetamine regulated transcript)"/>
    <property type="match status" value="1"/>
</dbReference>
<name>CART_MOUSE</name>
<gene>
    <name type="primary">Cartpt</name>
    <name type="synonym">Cart</name>
</gene>
<sequence length="129" mass="14285">MESSRLRLLPLLGAALLLLLPLLGARAQEDAELQPRALDIYSAVDDASHEKELPRRQLRAPGAMLQIEALQEVLKKLKSKRIPIYEKKYGQVPMCDAGEQCAVRKGARIGKLCDCPRGTSCNSFLLKCL</sequence>
<proteinExistence type="evidence at protein level"/>
<protein>
    <recommendedName>
        <fullName>Cocaine- and amphetamine-regulated transcript protein</fullName>
    </recommendedName>
    <component>
        <recommendedName>
            <fullName>CART(1-52)</fullName>
        </recommendedName>
    </component>
    <component>
        <recommendedName>
            <fullName>CART(55-102)</fullName>
        </recommendedName>
    </component>
    <component>
        <recommendedName>
            <fullName>CART(62-102)</fullName>
        </recommendedName>
    </component>
</protein>